<comment type="subunit">
    <text evidence="2">Component of the mitochondrial ribosome large subunit (39S) which comprises a 16S rRNA and about 50 distinct proteins.</text>
</comment>
<comment type="subcellular location">
    <subcellularLocation>
        <location evidence="2">Mitochondrion</location>
    </subcellularLocation>
</comment>
<comment type="similarity">
    <text evidence="4">Belongs to the universal ribosomal protein uL15 family.</text>
</comment>
<protein>
    <recommendedName>
        <fullName evidence="4">Large ribosomal subunit protein uL15m</fullName>
    </recommendedName>
    <alternativeName>
        <fullName>39S ribosomal protein L15, mitochondrial</fullName>
        <shortName>L15mt</shortName>
        <shortName>MRP-L15</shortName>
    </alternativeName>
</protein>
<feature type="transit peptide" description="Mitochondrion" evidence="1">
    <location>
        <begin position="1"/>
        <end position="20"/>
    </location>
</feature>
<feature type="chain" id="PRO_0000257842" description="Large ribosomal subunit protein uL15m">
    <location>
        <begin position="21"/>
        <end position="296"/>
    </location>
</feature>
<feature type="region of interest" description="Disordered" evidence="3">
    <location>
        <begin position="25"/>
        <end position="59"/>
    </location>
</feature>
<accession>Q6DGM3</accession>
<proteinExistence type="evidence at transcript level"/>
<organism>
    <name type="scientific">Danio rerio</name>
    <name type="common">Zebrafish</name>
    <name type="synonym">Brachydanio rerio</name>
    <dbReference type="NCBI Taxonomy" id="7955"/>
    <lineage>
        <taxon>Eukaryota</taxon>
        <taxon>Metazoa</taxon>
        <taxon>Chordata</taxon>
        <taxon>Craniata</taxon>
        <taxon>Vertebrata</taxon>
        <taxon>Euteleostomi</taxon>
        <taxon>Actinopterygii</taxon>
        <taxon>Neopterygii</taxon>
        <taxon>Teleostei</taxon>
        <taxon>Ostariophysi</taxon>
        <taxon>Cypriniformes</taxon>
        <taxon>Danionidae</taxon>
        <taxon>Danioninae</taxon>
        <taxon>Danio</taxon>
    </lineage>
</organism>
<sequence>MSLIKKPGGKTIEVVKNLPRITLANLRPNPGAKTLEKRRGRGMHGGNRSGWGHKGERQRCNRPRLGFEGGQTPFYLVIPKYGYNANHSRQPQYPPLSLRRLQYLIDLGRIDPSQPIDLTQLVNGRGVEIQPQKRDYGVQLVDEGADIFCAKVNLEVQAASEKAIAAVERNGGVITTSYYDPRSLQILIKPVPFFMPGEPIPKRLFPGEDLLPYYTDANNRGYLADPDKIQTARMDLAKKYGYSIPDISKDTLFEMLVQRKNPRHIFFGLSPGWVVNMADKKILKPTDDKVLQYYGS</sequence>
<dbReference type="EMBL" id="BC076318">
    <property type="protein sequence ID" value="AAH76318.1"/>
    <property type="molecule type" value="mRNA"/>
</dbReference>
<dbReference type="RefSeq" id="NP_001003435.1">
    <property type="nucleotide sequence ID" value="NM_001003435.1"/>
</dbReference>
<dbReference type="SMR" id="Q6DGM3"/>
<dbReference type="FunCoup" id="Q6DGM3">
    <property type="interactions" value="2366"/>
</dbReference>
<dbReference type="STRING" id="7955.ENSDARP00000133244"/>
<dbReference type="PaxDb" id="7955-ENSDARP00000060591"/>
<dbReference type="DNASU" id="445041"/>
<dbReference type="GeneID" id="445041"/>
<dbReference type="KEGG" id="dre:445041"/>
<dbReference type="AGR" id="ZFIN:ZDB-GENE-040801-168"/>
<dbReference type="CTD" id="29088"/>
<dbReference type="ZFIN" id="ZDB-GENE-040801-168">
    <property type="gene designation" value="mrpl15"/>
</dbReference>
<dbReference type="eggNOG" id="KOG0846">
    <property type="taxonomic scope" value="Eukaryota"/>
</dbReference>
<dbReference type="InParanoid" id="Q6DGM3"/>
<dbReference type="OrthoDB" id="361383at2759"/>
<dbReference type="PhylomeDB" id="Q6DGM3"/>
<dbReference type="Reactome" id="R-DRE-5389840">
    <property type="pathway name" value="Mitochondrial translation elongation"/>
</dbReference>
<dbReference type="Reactome" id="R-DRE-5419276">
    <property type="pathway name" value="Mitochondrial translation termination"/>
</dbReference>
<dbReference type="PRO" id="PR:Q6DGM3"/>
<dbReference type="Proteomes" id="UP000000437">
    <property type="component" value="Chromosome 7"/>
</dbReference>
<dbReference type="GO" id="GO:0005762">
    <property type="term" value="C:mitochondrial large ribosomal subunit"/>
    <property type="evidence" value="ECO:0000250"/>
    <property type="project" value="UniProtKB"/>
</dbReference>
<dbReference type="GO" id="GO:0003735">
    <property type="term" value="F:structural constituent of ribosome"/>
    <property type="evidence" value="ECO:0000318"/>
    <property type="project" value="GO_Central"/>
</dbReference>
<dbReference type="GO" id="GO:0006412">
    <property type="term" value="P:translation"/>
    <property type="evidence" value="ECO:0007669"/>
    <property type="project" value="InterPro"/>
</dbReference>
<dbReference type="FunFam" id="3.100.10.10:FF:000006">
    <property type="entry name" value="39S ribosomal protein L15, mitochondrial"/>
    <property type="match status" value="1"/>
</dbReference>
<dbReference type="Gene3D" id="3.100.10.10">
    <property type="match status" value="1"/>
</dbReference>
<dbReference type="HAMAP" id="MF_01341">
    <property type="entry name" value="Ribosomal_uL15"/>
    <property type="match status" value="1"/>
</dbReference>
<dbReference type="InterPro" id="IPR030878">
    <property type="entry name" value="Ribosomal_uL15"/>
</dbReference>
<dbReference type="InterPro" id="IPR021131">
    <property type="entry name" value="Ribosomal_uL15/eL18"/>
</dbReference>
<dbReference type="InterPro" id="IPR036227">
    <property type="entry name" value="Ribosomal_uL15/eL18_sf"/>
</dbReference>
<dbReference type="InterPro" id="IPR005749">
    <property type="entry name" value="Ribosomal_uL15_bac-type"/>
</dbReference>
<dbReference type="PANTHER" id="PTHR12934">
    <property type="entry name" value="50S RIBOSOMAL PROTEIN L15"/>
    <property type="match status" value="1"/>
</dbReference>
<dbReference type="PANTHER" id="PTHR12934:SF11">
    <property type="entry name" value="LARGE RIBOSOMAL SUBUNIT PROTEIN UL15M"/>
    <property type="match status" value="1"/>
</dbReference>
<dbReference type="Pfam" id="PF00828">
    <property type="entry name" value="Ribosomal_L27A"/>
    <property type="match status" value="1"/>
</dbReference>
<dbReference type="SUPFAM" id="SSF52080">
    <property type="entry name" value="Ribosomal proteins L15p and L18e"/>
    <property type="match status" value="1"/>
</dbReference>
<name>RM15_DANRE</name>
<gene>
    <name type="primary">mrpl15</name>
    <name type="ORF">zgc:92856</name>
</gene>
<keyword id="KW-0496">Mitochondrion</keyword>
<keyword id="KW-1185">Reference proteome</keyword>
<keyword id="KW-0687">Ribonucleoprotein</keyword>
<keyword id="KW-0689">Ribosomal protein</keyword>
<keyword id="KW-0809">Transit peptide</keyword>
<evidence type="ECO:0000250" key="1">
    <source>
        <dbReference type="UniProtKB" id="Q0VC21"/>
    </source>
</evidence>
<evidence type="ECO:0000250" key="2">
    <source>
        <dbReference type="UniProtKB" id="Q9P015"/>
    </source>
</evidence>
<evidence type="ECO:0000256" key="3">
    <source>
        <dbReference type="SAM" id="MobiDB-lite"/>
    </source>
</evidence>
<evidence type="ECO:0000305" key="4"/>
<reference key="1">
    <citation type="submission" date="2004-07" db="EMBL/GenBank/DDBJ databases">
        <authorList>
            <consortium name="NIH - Zebrafish Gene Collection (ZGC) project"/>
        </authorList>
    </citation>
    <scope>NUCLEOTIDE SEQUENCE [LARGE SCALE MRNA]</scope>
    <source>
        <tissue>Brain</tissue>
    </source>
</reference>